<protein>
    <recommendedName>
        <fullName evidence="1">NAD(P)H-quinone oxidoreductase subunit H, chloroplastic</fullName>
        <ecNumber evidence="1">7.1.1.-</ecNumber>
    </recommendedName>
    <alternativeName>
        <fullName>NAD(P)H dehydrogenase subunit H</fullName>
    </alternativeName>
    <alternativeName>
        <fullName evidence="1">NADH-plastoquinone oxidoreductase 49 kDa subunit</fullName>
    </alternativeName>
    <alternativeName>
        <fullName evidence="1">NADH-plastoquinone oxidoreductase subunit H</fullName>
    </alternativeName>
</protein>
<sequence length="391" mass="44913">MIEAKTDPMIVSMGPHHPSMHGVLRLIVTLDGENVLDCEPVVGYLHRGMEKIAENRTIVQYLPYVTRWDYLATMFTEAITVNAPERLANIEVPRRASYLRVIMLELSRIASHLLWLGPFMADLGAQTPFFYILREREMIYDLFEAATGMRMMHNYFRVGGVAADVPYGWIDKCLDFCEYFLPKVDEYEALITRNPIFLKRVKGVGTISPQQAINWGLSGPMLRASGVSWDLRKVDRYECYEDFHWSVESEETGDCLARYLVRIREMRTSTKIVQQALKSIPGGPTENLEARQLSQGRTSPWNEFDYQFLGKKASPTFKMPRQEHYVRVEAPKGELGVFLIGDDHVFPWRWKIRPPGFINVQILPNLVQGMKLADIMTILGSIDIIMGEVDR</sequence>
<feature type="chain" id="PRO_0000118605" description="NAD(P)H-quinone oxidoreductase subunit H, chloroplastic">
    <location>
        <begin position="1"/>
        <end position="391"/>
    </location>
</feature>
<gene>
    <name evidence="1" type="primary">ndhH</name>
</gene>
<dbReference type="EC" id="7.1.1.-" evidence="1"/>
<dbReference type="EMBL" id="AF137379">
    <property type="protein sequence ID" value="AAD54891.1"/>
    <property type="molecule type" value="Genomic_DNA"/>
</dbReference>
<dbReference type="RefSeq" id="NP_050920.1">
    <property type="nucleotide sequence ID" value="NC_000927.1"/>
</dbReference>
<dbReference type="SMR" id="Q9TKV6"/>
<dbReference type="GeneID" id="801920"/>
<dbReference type="GO" id="GO:0009535">
    <property type="term" value="C:chloroplast thylakoid membrane"/>
    <property type="evidence" value="ECO:0007669"/>
    <property type="project" value="UniProtKB-SubCell"/>
</dbReference>
<dbReference type="GO" id="GO:0051287">
    <property type="term" value="F:NAD binding"/>
    <property type="evidence" value="ECO:0007669"/>
    <property type="project" value="InterPro"/>
</dbReference>
<dbReference type="GO" id="GO:0016655">
    <property type="term" value="F:oxidoreductase activity, acting on NAD(P)H, quinone or similar compound as acceptor"/>
    <property type="evidence" value="ECO:0007669"/>
    <property type="project" value="UniProtKB-UniRule"/>
</dbReference>
<dbReference type="GO" id="GO:0048038">
    <property type="term" value="F:quinone binding"/>
    <property type="evidence" value="ECO:0007669"/>
    <property type="project" value="UniProtKB-KW"/>
</dbReference>
<dbReference type="GO" id="GO:0019684">
    <property type="term" value="P:photosynthesis, light reaction"/>
    <property type="evidence" value="ECO:0007669"/>
    <property type="project" value="UniProtKB-UniRule"/>
</dbReference>
<dbReference type="Gene3D" id="1.10.645.10">
    <property type="entry name" value="Cytochrome-c3 Hydrogenase, chain B"/>
    <property type="match status" value="1"/>
</dbReference>
<dbReference type="HAMAP" id="MF_01358">
    <property type="entry name" value="NDH1_NuoD"/>
    <property type="match status" value="1"/>
</dbReference>
<dbReference type="InterPro" id="IPR001135">
    <property type="entry name" value="NADH_Q_OxRdtase_suD"/>
</dbReference>
<dbReference type="InterPro" id="IPR014029">
    <property type="entry name" value="NADH_UbQ_OxRdtase_49kDa_CS"/>
</dbReference>
<dbReference type="InterPro" id="IPR022885">
    <property type="entry name" value="NDH1_su_D/H"/>
</dbReference>
<dbReference type="InterPro" id="IPR029014">
    <property type="entry name" value="NiFe-Hase_large"/>
</dbReference>
<dbReference type="NCBIfam" id="NF004739">
    <property type="entry name" value="PRK06075.1"/>
    <property type="match status" value="1"/>
</dbReference>
<dbReference type="NCBIfam" id="NF005649">
    <property type="entry name" value="PRK07415.1"/>
    <property type="match status" value="1"/>
</dbReference>
<dbReference type="PANTHER" id="PTHR11993:SF10">
    <property type="entry name" value="NADH DEHYDROGENASE [UBIQUINONE] IRON-SULFUR PROTEIN 2, MITOCHONDRIAL"/>
    <property type="match status" value="1"/>
</dbReference>
<dbReference type="PANTHER" id="PTHR11993">
    <property type="entry name" value="NADH-UBIQUINONE OXIDOREDUCTASE 49 KDA SUBUNIT"/>
    <property type="match status" value="1"/>
</dbReference>
<dbReference type="Pfam" id="PF00346">
    <property type="entry name" value="Complex1_49kDa"/>
    <property type="match status" value="1"/>
</dbReference>
<dbReference type="SUPFAM" id="SSF56762">
    <property type="entry name" value="HydB/Nqo4-like"/>
    <property type="match status" value="1"/>
</dbReference>
<dbReference type="PROSITE" id="PS00535">
    <property type="entry name" value="COMPLEX1_49K"/>
    <property type="match status" value="1"/>
</dbReference>
<reference key="1">
    <citation type="journal article" date="1999" name="Proc. Natl. Acad. Sci. U.S.A.">
        <title>The complete chloroplast DNA sequence of the green alga Nephroselmis olivacea: insights into the architecture of ancestral chloroplast genomes.</title>
        <authorList>
            <person name="Turmel M."/>
            <person name="Otis C."/>
            <person name="Lemieux C."/>
        </authorList>
    </citation>
    <scope>NUCLEOTIDE SEQUENCE [LARGE SCALE GENOMIC DNA]</scope>
    <source>
        <strain>NIES-484 / S-N-5-8</strain>
    </source>
</reference>
<accession>Q9TKV6</accession>
<keyword id="KW-0150">Chloroplast</keyword>
<keyword id="KW-0472">Membrane</keyword>
<keyword id="KW-0520">NAD</keyword>
<keyword id="KW-0521">NADP</keyword>
<keyword id="KW-0934">Plastid</keyword>
<keyword id="KW-0618">Plastoquinone</keyword>
<keyword id="KW-0874">Quinone</keyword>
<keyword id="KW-0793">Thylakoid</keyword>
<keyword id="KW-1278">Translocase</keyword>
<keyword id="KW-0813">Transport</keyword>
<comment type="function">
    <text evidence="1">NDH shuttles electrons from NAD(P)H:plastoquinone, via FMN and iron-sulfur (Fe-S) centers, to quinones in the photosynthetic chain and possibly in a chloroplast respiratory chain. The immediate electron acceptor for the enzyme in this species is believed to be plastoquinone. Couples the redox reaction to proton translocation, and thus conserves the redox energy in a proton gradient.</text>
</comment>
<comment type="catalytic activity">
    <reaction evidence="1">
        <text>a plastoquinone + NADH + (n+1) H(+)(in) = a plastoquinol + NAD(+) + n H(+)(out)</text>
        <dbReference type="Rhea" id="RHEA:42608"/>
        <dbReference type="Rhea" id="RHEA-COMP:9561"/>
        <dbReference type="Rhea" id="RHEA-COMP:9562"/>
        <dbReference type="ChEBI" id="CHEBI:15378"/>
        <dbReference type="ChEBI" id="CHEBI:17757"/>
        <dbReference type="ChEBI" id="CHEBI:57540"/>
        <dbReference type="ChEBI" id="CHEBI:57945"/>
        <dbReference type="ChEBI" id="CHEBI:62192"/>
    </reaction>
</comment>
<comment type="catalytic activity">
    <reaction evidence="1">
        <text>a plastoquinone + NADPH + (n+1) H(+)(in) = a plastoquinol + NADP(+) + n H(+)(out)</text>
        <dbReference type="Rhea" id="RHEA:42612"/>
        <dbReference type="Rhea" id="RHEA-COMP:9561"/>
        <dbReference type="Rhea" id="RHEA-COMP:9562"/>
        <dbReference type="ChEBI" id="CHEBI:15378"/>
        <dbReference type="ChEBI" id="CHEBI:17757"/>
        <dbReference type="ChEBI" id="CHEBI:57783"/>
        <dbReference type="ChEBI" id="CHEBI:58349"/>
        <dbReference type="ChEBI" id="CHEBI:62192"/>
    </reaction>
</comment>
<comment type="subunit">
    <text evidence="1">NDH is composed of at least 16 different subunits, 5 of which are encoded in the nucleus.</text>
</comment>
<comment type="subcellular location">
    <subcellularLocation>
        <location evidence="1">Plastid</location>
        <location evidence="1">Chloroplast thylakoid membrane</location>
        <topology evidence="1">Peripheral membrane protein</topology>
        <orientation evidence="1">Stromal side</orientation>
    </subcellularLocation>
</comment>
<comment type="similarity">
    <text evidence="1">Belongs to the complex I 49 kDa subunit family.</text>
</comment>
<organism>
    <name type="scientific">Nephroselmis olivacea</name>
    <name type="common">Green alga</name>
    <dbReference type="NCBI Taxonomy" id="31312"/>
    <lineage>
        <taxon>Eukaryota</taxon>
        <taxon>Viridiplantae</taxon>
        <taxon>Chlorophyta</taxon>
        <taxon>Nephroselmidophyceae</taxon>
        <taxon>Nephroselmidales</taxon>
        <taxon>Nephroselmidaceae</taxon>
        <taxon>Nephroselmis</taxon>
    </lineage>
</organism>
<proteinExistence type="inferred from homology"/>
<evidence type="ECO:0000255" key="1">
    <source>
        <dbReference type="HAMAP-Rule" id="MF_01358"/>
    </source>
</evidence>
<geneLocation type="chloroplast"/>
<name>NDHH_NEPOL</name>